<keyword id="KW-0067">ATP-binding</keyword>
<keyword id="KW-0418">Kinase</keyword>
<keyword id="KW-0460">Magnesium</keyword>
<keyword id="KW-0479">Metal-binding</keyword>
<keyword id="KW-0547">Nucleotide-binding</keyword>
<keyword id="KW-0784">Thiamine biosynthesis</keyword>
<keyword id="KW-0808">Transferase</keyword>
<organism>
    <name type="scientific">Escherichia coli O17:K52:H18 (strain UMN026 / ExPEC)</name>
    <dbReference type="NCBI Taxonomy" id="585056"/>
    <lineage>
        <taxon>Bacteria</taxon>
        <taxon>Pseudomonadati</taxon>
        <taxon>Pseudomonadota</taxon>
        <taxon>Gammaproteobacteria</taxon>
        <taxon>Enterobacterales</taxon>
        <taxon>Enterobacteriaceae</taxon>
        <taxon>Escherichia</taxon>
    </lineage>
</organism>
<comment type="function">
    <text evidence="1">Catalyzes the phosphorylation of the hydroxyl group of 4-methyl-5-beta-hydroxyethylthiazole (THZ).</text>
</comment>
<comment type="catalytic activity">
    <reaction evidence="1">
        <text>5-(2-hydroxyethyl)-4-methylthiazole + ATP = 4-methyl-5-(2-phosphooxyethyl)-thiazole + ADP + H(+)</text>
        <dbReference type="Rhea" id="RHEA:24212"/>
        <dbReference type="ChEBI" id="CHEBI:15378"/>
        <dbReference type="ChEBI" id="CHEBI:17957"/>
        <dbReference type="ChEBI" id="CHEBI:30616"/>
        <dbReference type="ChEBI" id="CHEBI:58296"/>
        <dbReference type="ChEBI" id="CHEBI:456216"/>
        <dbReference type="EC" id="2.7.1.50"/>
    </reaction>
</comment>
<comment type="cofactor">
    <cofactor evidence="1">
        <name>Mg(2+)</name>
        <dbReference type="ChEBI" id="CHEBI:18420"/>
    </cofactor>
</comment>
<comment type="pathway">
    <text evidence="1">Cofactor biosynthesis; thiamine diphosphate biosynthesis; 4-methyl-5-(2-phosphoethyl)-thiazole from 5-(2-hydroxyethyl)-4-methylthiazole: step 1/1.</text>
</comment>
<comment type="similarity">
    <text evidence="1">Belongs to the Thz kinase family.</text>
</comment>
<reference key="1">
    <citation type="journal article" date="2009" name="PLoS Genet.">
        <title>Organised genome dynamics in the Escherichia coli species results in highly diverse adaptive paths.</title>
        <authorList>
            <person name="Touchon M."/>
            <person name="Hoede C."/>
            <person name="Tenaillon O."/>
            <person name="Barbe V."/>
            <person name="Baeriswyl S."/>
            <person name="Bidet P."/>
            <person name="Bingen E."/>
            <person name="Bonacorsi S."/>
            <person name="Bouchier C."/>
            <person name="Bouvet O."/>
            <person name="Calteau A."/>
            <person name="Chiapello H."/>
            <person name="Clermont O."/>
            <person name="Cruveiller S."/>
            <person name="Danchin A."/>
            <person name="Diard M."/>
            <person name="Dossat C."/>
            <person name="Karoui M.E."/>
            <person name="Frapy E."/>
            <person name="Garry L."/>
            <person name="Ghigo J.M."/>
            <person name="Gilles A.M."/>
            <person name="Johnson J."/>
            <person name="Le Bouguenec C."/>
            <person name="Lescat M."/>
            <person name="Mangenot S."/>
            <person name="Martinez-Jehanne V."/>
            <person name="Matic I."/>
            <person name="Nassif X."/>
            <person name="Oztas S."/>
            <person name="Petit M.A."/>
            <person name="Pichon C."/>
            <person name="Rouy Z."/>
            <person name="Ruf C.S."/>
            <person name="Schneider D."/>
            <person name="Tourret J."/>
            <person name="Vacherie B."/>
            <person name="Vallenet D."/>
            <person name="Medigue C."/>
            <person name="Rocha E.P.C."/>
            <person name="Denamur E."/>
        </authorList>
    </citation>
    <scope>NUCLEOTIDE SEQUENCE [LARGE SCALE GENOMIC DNA]</scope>
    <source>
        <strain>UMN026 / ExPEC</strain>
    </source>
</reference>
<dbReference type="EC" id="2.7.1.50" evidence="1"/>
<dbReference type="EMBL" id="CU928163">
    <property type="protein sequence ID" value="CAR13624.1"/>
    <property type="molecule type" value="Genomic_DNA"/>
</dbReference>
<dbReference type="RefSeq" id="WP_001195596.1">
    <property type="nucleotide sequence ID" value="NC_011751.1"/>
</dbReference>
<dbReference type="RefSeq" id="YP_002413152.1">
    <property type="nucleotide sequence ID" value="NC_011751.1"/>
</dbReference>
<dbReference type="SMR" id="B7NCD4"/>
<dbReference type="STRING" id="585056.ECUMN_2436"/>
<dbReference type="KEGG" id="eum:ECUMN_2436"/>
<dbReference type="PATRIC" id="fig|585056.7.peg.2617"/>
<dbReference type="HOGENOM" id="CLU_019943_0_1_6"/>
<dbReference type="UniPathway" id="UPA00060">
    <property type="reaction ID" value="UER00139"/>
</dbReference>
<dbReference type="Proteomes" id="UP000007097">
    <property type="component" value="Chromosome"/>
</dbReference>
<dbReference type="GO" id="GO:0005524">
    <property type="term" value="F:ATP binding"/>
    <property type="evidence" value="ECO:0007669"/>
    <property type="project" value="UniProtKB-UniRule"/>
</dbReference>
<dbReference type="GO" id="GO:0004417">
    <property type="term" value="F:hydroxyethylthiazole kinase activity"/>
    <property type="evidence" value="ECO:0007669"/>
    <property type="project" value="UniProtKB-UniRule"/>
</dbReference>
<dbReference type="GO" id="GO:0000287">
    <property type="term" value="F:magnesium ion binding"/>
    <property type="evidence" value="ECO:0007669"/>
    <property type="project" value="UniProtKB-UniRule"/>
</dbReference>
<dbReference type="GO" id="GO:0009228">
    <property type="term" value="P:thiamine biosynthetic process"/>
    <property type="evidence" value="ECO:0007669"/>
    <property type="project" value="UniProtKB-KW"/>
</dbReference>
<dbReference type="GO" id="GO:0009229">
    <property type="term" value="P:thiamine diphosphate biosynthetic process"/>
    <property type="evidence" value="ECO:0007669"/>
    <property type="project" value="UniProtKB-UniRule"/>
</dbReference>
<dbReference type="CDD" id="cd01170">
    <property type="entry name" value="THZ_kinase"/>
    <property type="match status" value="1"/>
</dbReference>
<dbReference type="FunFam" id="3.40.1190.20:FF:000015">
    <property type="entry name" value="Hydroxyethylthiazole kinase"/>
    <property type="match status" value="1"/>
</dbReference>
<dbReference type="Gene3D" id="3.40.1190.20">
    <property type="match status" value="1"/>
</dbReference>
<dbReference type="HAMAP" id="MF_00228">
    <property type="entry name" value="Thz_kinase"/>
    <property type="match status" value="1"/>
</dbReference>
<dbReference type="InterPro" id="IPR000417">
    <property type="entry name" value="Hyethyz_kinase"/>
</dbReference>
<dbReference type="InterPro" id="IPR029056">
    <property type="entry name" value="Ribokinase-like"/>
</dbReference>
<dbReference type="NCBIfam" id="NF006830">
    <property type="entry name" value="PRK09355.1"/>
    <property type="match status" value="1"/>
</dbReference>
<dbReference type="NCBIfam" id="TIGR00694">
    <property type="entry name" value="thiM"/>
    <property type="match status" value="1"/>
</dbReference>
<dbReference type="Pfam" id="PF02110">
    <property type="entry name" value="HK"/>
    <property type="match status" value="1"/>
</dbReference>
<dbReference type="PIRSF" id="PIRSF000513">
    <property type="entry name" value="Thz_kinase"/>
    <property type="match status" value="1"/>
</dbReference>
<dbReference type="PRINTS" id="PR01099">
    <property type="entry name" value="HYETHTZKNASE"/>
</dbReference>
<dbReference type="SUPFAM" id="SSF53613">
    <property type="entry name" value="Ribokinase-like"/>
    <property type="match status" value="1"/>
</dbReference>
<feature type="chain" id="PRO_1000198121" description="Hydroxyethylthiazole kinase">
    <location>
        <begin position="1"/>
        <end position="262"/>
    </location>
</feature>
<feature type="binding site" evidence="1">
    <location>
        <position position="50"/>
    </location>
    <ligand>
        <name>substrate</name>
    </ligand>
</feature>
<feature type="binding site" evidence="1">
    <location>
        <position position="125"/>
    </location>
    <ligand>
        <name>ATP</name>
        <dbReference type="ChEBI" id="CHEBI:30616"/>
    </ligand>
</feature>
<feature type="binding site" evidence="1">
    <location>
        <position position="171"/>
    </location>
    <ligand>
        <name>ATP</name>
        <dbReference type="ChEBI" id="CHEBI:30616"/>
    </ligand>
</feature>
<feature type="binding site" evidence="1">
    <location>
        <position position="198"/>
    </location>
    <ligand>
        <name>substrate</name>
    </ligand>
</feature>
<name>THIM_ECOLU</name>
<evidence type="ECO:0000255" key="1">
    <source>
        <dbReference type="HAMAP-Rule" id="MF_00228"/>
    </source>
</evidence>
<gene>
    <name evidence="1" type="primary">thiM</name>
    <name type="ordered locus">ECUMN_2436</name>
</gene>
<accession>B7NCD4</accession>
<protein>
    <recommendedName>
        <fullName evidence="1">Hydroxyethylthiazole kinase</fullName>
        <ecNumber evidence="1">2.7.1.50</ecNumber>
    </recommendedName>
    <alternativeName>
        <fullName evidence="1">4-methyl-5-beta-hydroxyethylthiazole kinase</fullName>
        <shortName evidence="1">TH kinase</shortName>
        <shortName evidence="1">Thz kinase</shortName>
    </alternativeName>
</protein>
<proteinExistence type="inferred from homology"/>
<sequence>MQVDLLSSAQSAHALHLFHQHSPLVHCMTNDVVQTFTANTLLALGASPAMVIETEEASQFAAIASALLINVGTLTQPRAQAMRAAVEQAKRSQTPWTLDPVAVGALDYRRCFCLELLSHKPTAIRGNASEIMALAGIANGGRGVDTTDAAANAIPAAQTLARETGAIVVVTGEVDYVTDGHRIIGIHGGDPLMTKVVGTGCALSAVVAACCALPGDMLENVASACHWMKQAGERAVARSEGPGSFVPHFLDALWQLTPEVQA</sequence>